<keyword id="KW-0025">Alternative splicing</keyword>
<keyword id="KW-0067">ATP-binding</keyword>
<keyword id="KW-0963">Cytoplasm</keyword>
<keyword id="KW-1017">Isopeptide bond</keyword>
<keyword id="KW-0418">Kinase</keyword>
<keyword id="KW-0547">Nucleotide-binding</keyword>
<keyword id="KW-0539">Nucleus</keyword>
<keyword id="KW-0597">Phosphoprotein</keyword>
<keyword id="KW-1185">Reference proteome</keyword>
<keyword id="KW-0723">Serine/threonine-protein kinase</keyword>
<keyword id="KW-0804">Transcription</keyword>
<keyword id="KW-0805">Transcription regulation</keyword>
<keyword id="KW-0808">Transferase</keyword>
<keyword id="KW-0832">Ubl conjugation</keyword>
<evidence type="ECO:0000250" key="1"/>
<evidence type="ECO:0000250" key="2">
    <source>
        <dbReference type="UniProtKB" id="O88904"/>
    </source>
</evidence>
<evidence type="ECO:0000250" key="3">
    <source>
        <dbReference type="UniProtKB" id="Q86Z02"/>
    </source>
</evidence>
<evidence type="ECO:0000255" key="4">
    <source>
        <dbReference type="PROSITE-ProRule" id="PRU00159"/>
    </source>
</evidence>
<evidence type="ECO:0000255" key="5">
    <source>
        <dbReference type="PROSITE-ProRule" id="PRU10027"/>
    </source>
</evidence>
<evidence type="ECO:0000256" key="6">
    <source>
        <dbReference type="SAM" id="MobiDB-lite"/>
    </source>
</evidence>
<evidence type="ECO:0000303" key="7">
    <source ref="1"/>
</evidence>
<evidence type="ECO:0000305" key="8"/>
<evidence type="ECO:0000312" key="9">
    <source>
        <dbReference type="EMBL" id="ABO47653.1"/>
    </source>
</evidence>
<name>HIPK1_RAT</name>
<accession>A4L9P5</accession>
<accession>A4L9P6</accession>
<protein>
    <recommendedName>
        <fullName>Homeodomain-interacting protein kinase 1</fullName>
        <ecNumber>2.7.11.1</ecNumber>
    </recommendedName>
</protein>
<reference evidence="8 9" key="1">
    <citation type="submission" date="2007-02" db="EMBL/GenBank/DDBJ databases">
        <authorList>
            <person name="Hagemann C."/>
            <person name="Stojic J."/>
            <person name="Weigelin B."/>
            <person name="Kessler A."/>
            <person name="Roosen K."/>
            <person name="Vince G.H."/>
        </authorList>
    </citation>
    <scope>NUCLEOTIDE SEQUENCE [MRNA] (ISOFORMS 1 AND 2)</scope>
</reference>
<dbReference type="EC" id="2.7.11.1"/>
<dbReference type="EMBL" id="EF460311">
    <property type="protein sequence ID" value="ABO47653.1"/>
    <property type="molecule type" value="mRNA"/>
</dbReference>
<dbReference type="EMBL" id="EF460312">
    <property type="protein sequence ID" value="ABO47654.1"/>
    <property type="molecule type" value="mRNA"/>
</dbReference>
<dbReference type="SMR" id="A4L9P5"/>
<dbReference type="FunCoup" id="A4L9P5">
    <property type="interactions" value="2364"/>
</dbReference>
<dbReference type="IntAct" id="A4L9P5">
    <property type="interactions" value="1"/>
</dbReference>
<dbReference type="MINT" id="A4L9P5"/>
<dbReference type="STRING" id="10116.ENSRNOP00000061079"/>
<dbReference type="CarbonylDB" id="A4L9P5"/>
<dbReference type="iPTMnet" id="A4L9P5"/>
<dbReference type="PhosphoSitePlus" id="A4L9P5"/>
<dbReference type="PaxDb" id="10116-ENSRNOP00000061079"/>
<dbReference type="PeptideAtlas" id="A4L9P5"/>
<dbReference type="UCSC" id="RGD:1304941">
    <molecule id="A4L9P5-1"/>
    <property type="organism name" value="rat"/>
</dbReference>
<dbReference type="AGR" id="RGD:1304941"/>
<dbReference type="RGD" id="1304941">
    <property type="gene designation" value="Hipk1"/>
</dbReference>
<dbReference type="eggNOG" id="KOG0667">
    <property type="taxonomic scope" value="Eukaryota"/>
</dbReference>
<dbReference type="InParanoid" id="A4L9P5"/>
<dbReference type="PhylomeDB" id="A4L9P5"/>
<dbReference type="Reactome" id="R-RNO-6804756">
    <property type="pathway name" value="Regulation of TP53 Activity through Phosphorylation"/>
</dbReference>
<dbReference type="PRO" id="PR:A4L9P5"/>
<dbReference type="Proteomes" id="UP000002494">
    <property type="component" value="Unplaced"/>
</dbReference>
<dbReference type="GO" id="GO:0005737">
    <property type="term" value="C:cytoplasm"/>
    <property type="evidence" value="ECO:0000266"/>
    <property type="project" value="RGD"/>
</dbReference>
<dbReference type="GO" id="GO:0016607">
    <property type="term" value="C:nuclear speck"/>
    <property type="evidence" value="ECO:0000266"/>
    <property type="project" value="RGD"/>
</dbReference>
<dbReference type="GO" id="GO:0005634">
    <property type="term" value="C:nucleus"/>
    <property type="evidence" value="ECO:0000266"/>
    <property type="project" value="RGD"/>
</dbReference>
<dbReference type="GO" id="GO:0016605">
    <property type="term" value="C:PML body"/>
    <property type="evidence" value="ECO:0000266"/>
    <property type="project" value="RGD"/>
</dbReference>
<dbReference type="GO" id="GO:0005524">
    <property type="term" value="F:ATP binding"/>
    <property type="evidence" value="ECO:0007669"/>
    <property type="project" value="UniProtKB-KW"/>
</dbReference>
<dbReference type="GO" id="GO:0106310">
    <property type="term" value="F:protein serine kinase activity"/>
    <property type="evidence" value="ECO:0007669"/>
    <property type="project" value="RHEA"/>
</dbReference>
<dbReference type="GO" id="GO:0004674">
    <property type="term" value="F:protein serine/threonine kinase activity"/>
    <property type="evidence" value="ECO:0000318"/>
    <property type="project" value="GO_Central"/>
</dbReference>
<dbReference type="GO" id="GO:0004713">
    <property type="term" value="F:protein tyrosine kinase activity"/>
    <property type="evidence" value="ECO:0000318"/>
    <property type="project" value="GO_Central"/>
</dbReference>
<dbReference type="GO" id="GO:0034333">
    <property type="term" value="P:adherens junction assembly"/>
    <property type="evidence" value="ECO:0000266"/>
    <property type="project" value="RGD"/>
</dbReference>
<dbReference type="GO" id="GO:0009952">
    <property type="term" value="P:anterior/posterior pattern specification"/>
    <property type="evidence" value="ECO:0000266"/>
    <property type="project" value="RGD"/>
</dbReference>
<dbReference type="GO" id="GO:0008283">
    <property type="term" value="P:cell population proliferation"/>
    <property type="evidence" value="ECO:0000266"/>
    <property type="project" value="RGD"/>
</dbReference>
<dbReference type="GO" id="GO:0048596">
    <property type="term" value="P:embryonic camera-type eye morphogenesis"/>
    <property type="evidence" value="ECO:0000266"/>
    <property type="project" value="RGD"/>
</dbReference>
<dbReference type="GO" id="GO:0060059">
    <property type="term" value="P:embryonic retina morphogenesis in camera-type eye"/>
    <property type="evidence" value="ECO:0000266"/>
    <property type="project" value="RGD"/>
</dbReference>
<dbReference type="GO" id="GO:0072577">
    <property type="term" value="P:endothelial cell apoptotic process"/>
    <property type="evidence" value="ECO:0000266"/>
    <property type="project" value="RGD"/>
</dbReference>
<dbReference type="GO" id="GO:0097191">
    <property type="term" value="P:extrinsic apoptotic signaling pathway"/>
    <property type="evidence" value="ECO:0000266"/>
    <property type="project" value="RGD"/>
</dbReference>
<dbReference type="GO" id="GO:0042771">
    <property type="term" value="P:intrinsic apoptotic signaling pathway in response to DNA damage by p53 class mediator"/>
    <property type="evidence" value="ECO:0000266"/>
    <property type="project" value="RGD"/>
</dbReference>
<dbReference type="GO" id="GO:0061072">
    <property type="term" value="P:iris morphogenesis"/>
    <property type="evidence" value="ECO:0000266"/>
    <property type="project" value="RGD"/>
</dbReference>
<dbReference type="GO" id="GO:0060235">
    <property type="term" value="P:lens induction in camera-type eye"/>
    <property type="evidence" value="ECO:0000266"/>
    <property type="project" value="RGD"/>
</dbReference>
<dbReference type="GO" id="GO:0030182">
    <property type="term" value="P:neuron differentiation"/>
    <property type="evidence" value="ECO:0000266"/>
    <property type="project" value="RGD"/>
</dbReference>
<dbReference type="GO" id="GO:0008284">
    <property type="term" value="P:positive regulation of cell population proliferation"/>
    <property type="evidence" value="ECO:0000266"/>
    <property type="project" value="RGD"/>
</dbReference>
<dbReference type="GO" id="GO:0010803">
    <property type="term" value="P:regulation of tumor necrosis factor-mediated signaling pathway"/>
    <property type="evidence" value="ECO:0000266"/>
    <property type="project" value="RGD"/>
</dbReference>
<dbReference type="GO" id="GO:0010842">
    <property type="term" value="P:retina layer formation"/>
    <property type="evidence" value="ECO:0000266"/>
    <property type="project" value="RGD"/>
</dbReference>
<dbReference type="GO" id="GO:0007224">
    <property type="term" value="P:smoothened signaling pathway"/>
    <property type="evidence" value="ECO:0000266"/>
    <property type="project" value="RGD"/>
</dbReference>
<dbReference type="CDD" id="cd14228">
    <property type="entry name" value="STKc_HIPK1"/>
    <property type="match status" value="1"/>
</dbReference>
<dbReference type="FunFam" id="1.10.510.10:FF:000029">
    <property type="entry name" value="Homeodomain-interacting protein kinase 2 isoform 1"/>
    <property type="match status" value="1"/>
</dbReference>
<dbReference type="FunFam" id="3.30.200.20:FF:000022">
    <property type="entry name" value="Homeodomain-interacting protein kinase 2 isoform 1"/>
    <property type="match status" value="1"/>
</dbReference>
<dbReference type="Gene3D" id="3.30.200.20">
    <property type="entry name" value="Phosphorylase Kinase, domain 1"/>
    <property type="match status" value="1"/>
</dbReference>
<dbReference type="Gene3D" id="1.10.510.10">
    <property type="entry name" value="Transferase(Phosphotransferase) domain 1"/>
    <property type="match status" value="1"/>
</dbReference>
<dbReference type="InterPro" id="IPR011009">
    <property type="entry name" value="Kinase-like_dom_sf"/>
</dbReference>
<dbReference type="InterPro" id="IPR000719">
    <property type="entry name" value="Prot_kinase_dom"/>
</dbReference>
<dbReference type="InterPro" id="IPR017441">
    <property type="entry name" value="Protein_kinase_ATP_BS"/>
</dbReference>
<dbReference type="InterPro" id="IPR008271">
    <property type="entry name" value="Ser/Thr_kinase_AS"/>
</dbReference>
<dbReference type="InterPro" id="IPR050494">
    <property type="entry name" value="Ser_Thr_dual-spec_kinase"/>
</dbReference>
<dbReference type="PANTHER" id="PTHR24058">
    <property type="entry name" value="DUAL SPECIFICITY PROTEIN KINASE"/>
    <property type="match status" value="1"/>
</dbReference>
<dbReference type="PANTHER" id="PTHR24058:SF43">
    <property type="entry name" value="HOMEODOMAIN-INTERACTING PROTEIN KINASE 1"/>
    <property type="match status" value="1"/>
</dbReference>
<dbReference type="Pfam" id="PF00069">
    <property type="entry name" value="Pkinase"/>
    <property type="match status" value="1"/>
</dbReference>
<dbReference type="SMART" id="SM00220">
    <property type="entry name" value="S_TKc"/>
    <property type="match status" value="1"/>
</dbReference>
<dbReference type="SUPFAM" id="SSF56112">
    <property type="entry name" value="Protein kinase-like (PK-like)"/>
    <property type="match status" value="1"/>
</dbReference>
<dbReference type="PROSITE" id="PS00107">
    <property type="entry name" value="PROTEIN_KINASE_ATP"/>
    <property type="match status" value="1"/>
</dbReference>
<dbReference type="PROSITE" id="PS50011">
    <property type="entry name" value="PROTEIN_KINASE_DOM"/>
    <property type="match status" value="1"/>
</dbReference>
<dbReference type="PROSITE" id="PS00108">
    <property type="entry name" value="PROTEIN_KINASE_ST"/>
    <property type="match status" value="1"/>
</dbReference>
<comment type="function">
    <text evidence="3">Serine/threonine-protein kinase involved in transcription regulation and TNF-mediated cellular apoptosis. Plays a role as a corepressor for homeodomain transcription factors. Phosphorylates DAXX and MYB. Phosphorylates DAXX in response to stress, and mediates its translocation from the nucleus to the cytoplasm. Inactivates MYB transcription factor activity by phosphorylation. Prevents MAP3K5-JNK activation in the absence of TNF. TNF triggers its translocation to the cytoplasm in response to stress stimuli, thus activating nuclear MAP3K5-JNK by derepression and promoting apoptosis. May be involved in anti-oxidative stress responses. Involved in the regulation of eye size, lens formation and retinal lamination during late embryogenesis. Promotes angiogenesis and to be involved in erythroid differentiation. May be involved in malignant squamous cell tumor formation (By similarity). Phosphorylates PAGE4 at 'Thr-51' which is critical for the ability of PAGE4 to potentiate the transcriptional activator activity of JUN (By similarity).</text>
</comment>
<comment type="catalytic activity">
    <reaction evidence="2">
        <text>L-seryl-[protein] + ATP = O-phospho-L-seryl-[protein] + ADP + H(+)</text>
        <dbReference type="Rhea" id="RHEA:17989"/>
        <dbReference type="Rhea" id="RHEA-COMP:9863"/>
        <dbReference type="Rhea" id="RHEA-COMP:11604"/>
        <dbReference type="ChEBI" id="CHEBI:15378"/>
        <dbReference type="ChEBI" id="CHEBI:29999"/>
        <dbReference type="ChEBI" id="CHEBI:30616"/>
        <dbReference type="ChEBI" id="CHEBI:83421"/>
        <dbReference type="ChEBI" id="CHEBI:456216"/>
        <dbReference type="EC" id="2.7.11.1"/>
    </reaction>
</comment>
<comment type="catalytic activity">
    <reaction evidence="2">
        <text>L-threonyl-[protein] + ATP = O-phospho-L-threonyl-[protein] + ADP + H(+)</text>
        <dbReference type="Rhea" id="RHEA:46608"/>
        <dbReference type="Rhea" id="RHEA-COMP:11060"/>
        <dbReference type="Rhea" id="RHEA-COMP:11605"/>
        <dbReference type="ChEBI" id="CHEBI:15378"/>
        <dbReference type="ChEBI" id="CHEBI:30013"/>
        <dbReference type="ChEBI" id="CHEBI:30616"/>
        <dbReference type="ChEBI" id="CHEBI:61977"/>
        <dbReference type="ChEBI" id="CHEBI:456216"/>
        <dbReference type="EC" id="2.7.11.1"/>
    </reaction>
</comment>
<comment type="subunit">
    <text evidence="1">Interacts with Nkx1-2, Nkx2-5, MYB, PARK7, DAXX and p53/TP53. Part of a cytoplasmic complex made of HIPK1, DAB2IP and MAP3K5 in response to TNF. This complex formation promotes MAP3K5-JNK activation and subsequent apoptosis (By similarity).</text>
</comment>
<comment type="subcellular location">
    <subcellularLocation>
        <location evidence="2">Nucleus</location>
    </subcellularLocation>
    <subcellularLocation>
        <location evidence="2">Cytoplasm</location>
    </subcellularLocation>
    <subcellularLocation>
        <location evidence="2">Nucleus speckle</location>
    </subcellularLocation>
    <text evidence="2">Predominantly nuclear. Translocates from nucleus to cytoplasm in response to stress stimuli via SENP1-mediated desumoylation (By similarity).</text>
</comment>
<comment type="alternative products">
    <event type="alternative splicing"/>
    <isoform>
        <id>A4L9P5-1</id>
        <name>1</name>
        <sequence type="displayed"/>
    </isoform>
    <isoform>
        <id>A4L9P5-2</id>
        <name>2</name>
        <sequence type="described" ref="VSP_052489"/>
    </isoform>
</comment>
<comment type="PTM">
    <text evidence="3">Phosphorylated and activated by JNK1. Autophosphorylated (By similarity).</text>
</comment>
<comment type="PTM">
    <text evidence="1">Sumoylated. When conjugated it is directed to nuclear speckles. SENP1-mediated desumoylation is mediated by TNF in response to stress stimuli, triggering transient translocation from nucleus to cytoplasm (By similarity).</text>
</comment>
<comment type="similarity">
    <text evidence="8">Belongs to the protein kinase superfamily. CMGC Ser/Thr protein kinase family. HIPK subfamily.</text>
</comment>
<sequence length="1211" mass="130801">MASQLQVFSPPSVSSSAFCSAKKLKIEPSGWDVSGQSSNDKYYTHSKTLPATQGQASSSHQVANFNIPAYDQGLLLQAPAVEHIVVTAADSSGSAATATFQSSQTLTHRSNVSLLEPYQKCGLKRKSEEVDSNGSVQIIEEHPPLMLQNRTVVGAAATTTTVTTKSSSSSGEGDYQLVQHEILCSMTNSYEVLEFLGRGTFGQVAKCWKRSTKEIVAIKILKNHPSYARQGQIEVSILSRLSSENADEYNFVRSYECFQHKNHTCLVFEMLEQNLYDFLKQNKFSPLPLKYIRPILQQVATALMKLKSLGLIHADLKPENIMLVDPVRQPYRVKVIDFGSASHVSKAVCSTYLQSRYYRAPEIILGLPFCEAIDMWSLGCVIAELFLGWPLYPGASEYDQIRYISQTQGLPAEYLLSAGTKTTRFFNRDPNLGYPLWRLKTPEEHELETGIKSKEARKYIFNCLDDMAQVNMSTDLEGTDMLAEKADRREYIDLLKKMLTIDADKRVTPLKTLNHQFVTMTHLLDFPHSNHVKSCFQNMEICKRRVHMYDTVSQIKSPFTTHVAPSTSTNLTMSFSNQLSTVHNQASVLASSSTAAAATLSLANSDVSLLNYQSALYPPSAAPVPGVAQQGVSLQPGTTQICTQTDPFQQTFIVCPPAFQTGLQATTKHSGFPVRMDNAVPLVPQAPAAQPLQIQSGVLTQGSCTPLMVATLHPQVATITPQYAVPFTLSCAAGRPALVEQTAAVQQAWPGGTQQILLPSAWQQLPGVALHNSVQPTAVIPEAMGSSQQLADWRNAHSHGNQYSTIMQQPSLLTNHVTLATAQPLNVGVAHVVRQQQSSSLPSRKNKQSAPVSSTSSLEVLPSQVYSLVGSSPLRTTSSYNSLVPVQDQHQPIIIPDTPSPPVSVITIRSDTDEEEDNKFKPSSSSLKARSNVISYVTVNDSPDSDSSLSSPYPTDTLSALRGNSGTLLEGPGRTAADGIGTRTIIVPPLKTQLGDCTGATQASGLLSSSKTKPVASVSGQSSGCCITPTGYRAQRGGASAVQPLNLSQNQQSSSASTSQERSSNPAPRRQQAFVAPLSQAPYAFQHGSPLHSTGHPHLAPAPAHLPSQPHLYTYAAPTSAAALGSTSSIAHLFSPQGSSRHAAAYTTHPSTLVHQVPVSVGPSLLTSASVAPAQYQHQFATQSYIGSSRGSTIYTGYPLSPTKISQYSYL</sequence>
<feature type="chain" id="PRO_0000296298" description="Homeodomain-interacting protein kinase 1">
    <location>
        <begin position="1"/>
        <end position="1211"/>
    </location>
</feature>
<feature type="domain" description="Protein kinase" evidence="4">
    <location>
        <begin position="190"/>
        <end position="518"/>
    </location>
</feature>
<feature type="region of interest" description="Disordered" evidence="6">
    <location>
        <begin position="835"/>
        <end position="856"/>
    </location>
</feature>
<feature type="region of interest" description="Interaction with TP53" evidence="2">
    <location>
        <begin position="885"/>
        <end position="1094"/>
    </location>
</feature>
<feature type="region of interest" description="Required for localization to nuclear speckles" evidence="1">
    <location>
        <begin position="891"/>
        <end position="998"/>
    </location>
</feature>
<feature type="region of interest" description="SUMO interaction motifs (SIM); required for nuclear localization and kinase activity" evidence="1">
    <location>
        <begin position="902"/>
        <end position="926"/>
    </location>
</feature>
<feature type="region of interest" description="Disordered" evidence="6">
    <location>
        <begin position="1002"/>
        <end position="1023"/>
    </location>
</feature>
<feature type="region of interest" description="Disordered" evidence="6">
    <location>
        <begin position="1047"/>
        <end position="1070"/>
    </location>
</feature>
<feature type="region of interest" description="Disordered" evidence="6">
    <location>
        <begin position="1085"/>
        <end position="1105"/>
    </location>
</feature>
<feature type="short sequence motif" description="Nuclear localization signal 1 (NLS1)" evidence="1">
    <location>
        <begin position="844"/>
        <end position="847"/>
    </location>
</feature>
<feature type="compositionally biased region" description="Low complexity" evidence="6">
    <location>
        <begin position="1048"/>
        <end position="1064"/>
    </location>
</feature>
<feature type="compositionally biased region" description="Low complexity" evidence="6">
    <location>
        <begin position="1096"/>
        <end position="1105"/>
    </location>
</feature>
<feature type="active site" description="Proton acceptor" evidence="4 5">
    <location>
        <position position="315"/>
    </location>
</feature>
<feature type="binding site" evidence="4">
    <location>
        <begin position="196"/>
        <end position="204"/>
    </location>
    <ligand>
        <name>ATP</name>
        <dbReference type="ChEBI" id="CHEBI:30616"/>
    </ligand>
</feature>
<feature type="binding site" evidence="4">
    <location>
        <position position="219"/>
    </location>
    <ligand>
        <name>ATP</name>
        <dbReference type="ChEBI" id="CHEBI:30616"/>
    </ligand>
</feature>
<feature type="modified residue" description="Phosphoserine" evidence="3">
    <location>
        <position position="872"/>
    </location>
</feature>
<feature type="modified residue" description="Phosphoserine" evidence="3">
    <location>
        <position position="1201"/>
    </location>
</feature>
<feature type="cross-link" description="Glycyl lysine isopeptide (Lys-Gly) (interchain with G-Cter in SUMO); alternate" evidence="1">
    <location>
        <position position="25"/>
    </location>
</feature>
<feature type="cross-link" description="Glycyl lysine isopeptide (Lys-Gly) (interchain with G-Cter in SUMO2); alternate" evidence="3">
    <location>
        <position position="25"/>
    </location>
</feature>
<feature type="cross-link" description="Glycyl lysine isopeptide (Lys-Gly) (interchain with G-Cter in SUMO2)" evidence="3">
    <location>
        <position position="120"/>
    </location>
</feature>
<feature type="cross-link" description="Glycyl lysine isopeptide (Lys-Gly) (interchain with G-Cter in SUMO2)" evidence="3">
    <location>
        <position position="124"/>
    </location>
</feature>
<feature type="cross-link" description="Glycyl lysine isopeptide (Lys-Gly) (interchain with G-Cter in SUMO2)" evidence="3">
    <location>
        <position position="991"/>
    </location>
</feature>
<feature type="cross-link" description="Glycyl lysine isopeptide (Lys-Gly) (interchain with G-Cter in SUMO)" evidence="1">
    <location>
        <position position="1204"/>
    </location>
</feature>
<feature type="splice variant" id="VSP_052489" description="In isoform 2." evidence="7">
    <location>
        <begin position="552"/>
        <end position="585"/>
    </location>
</feature>
<proteinExistence type="evidence at transcript level"/>
<gene>
    <name evidence="9" type="primary">Hipk1</name>
</gene>
<organism>
    <name type="scientific">Rattus norvegicus</name>
    <name type="common">Rat</name>
    <dbReference type="NCBI Taxonomy" id="10116"/>
    <lineage>
        <taxon>Eukaryota</taxon>
        <taxon>Metazoa</taxon>
        <taxon>Chordata</taxon>
        <taxon>Craniata</taxon>
        <taxon>Vertebrata</taxon>
        <taxon>Euteleostomi</taxon>
        <taxon>Mammalia</taxon>
        <taxon>Eutheria</taxon>
        <taxon>Euarchontoglires</taxon>
        <taxon>Glires</taxon>
        <taxon>Rodentia</taxon>
        <taxon>Myomorpha</taxon>
        <taxon>Muroidea</taxon>
        <taxon>Muridae</taxon>
        <taxon>Murinae</taxon>
        <taxon>Rattus</taxon>
    </lineage>
</organism>